<evidence type="ECO:0000250" key="1"/>
<evidence type="ECO:0000250" key="2">
    <source>
        <dbReference type="UniProtKB" id="Q8VD65"/>
    </source>
</evidence>
<evidence type="ECO:0000250" key="3">
    <source>
        <dbReference type="UniProtKB" id="Q99570"/>
    </source>
</evidence>
<evidence type="ECO:0000255" key="4">
    <source>
        <dbReference type="PROSITE-ProRule" id="PRU00159"/>
    </source>
</evidence>
<evidence type="ECO:0000255" key="5">
    <source>
        <dbReference type="PROSITE-ProRule" id="PRU10027"/>
    </source>
</evidence>
<evidence type="ECO:0000256" key="6">
    <source>
        <dbReference type="SAM" id="MobiDB-lite"/>
    </source>
</evidence>
<evidence type="ECO:0000305" key="7"/>
<sequence length="1358" mass="152447">MGNQLAGIAPSQILSVESYFSDIHDFEYDKSLGSTRFFKVARAKHREGLVVVKVFAIQDPTLPLTSYKQELEELKIRLHSAQNCLPFQKAAEKASEKAAMLFRQYVRDNLYDRISTRPFLNNIEKRWIAFQILTAVDQAHKSGVRHGDIKTENVMVTSWNWVLLTDFASFKPTYLPEDNPADFNYFFDTSRRRTCYIAPERFVDGGMFATELEYMRDPSTPLVDLNSNQRTRGELKRAMDIFSAGCVIAELFTEGVPLFDLSQLLAYRNGHFFPEQVLNKIEDRSIRELVTQMIQREPGQRLEADDYLKQQRGNAFPEVFYTFLQPYMAQFAKETFLSADERILVIRKDLGNIIHNLCGHDLPEKAEGESKASGLVVLVSVITSCLQTLKSCDSKLAALELILHLAPRLSVEILLDRITPYLLHFSNNSVPRVRAEALRTLTKVLALVQEVPRNDVNIYPEYILPGIAHLAQDDATIVRLAYAENIALLAETALRFLELVQLKTLNMENEPDSEEVDEATRPNGDYDTELQALHEMVQQKVVTLLSDPENIVKQTLMENGITRLCVFFGRQKANDVLLSHMITFLNDKNDWHLRGAFFDSIVGVAAYVGWQSSSILKPLLQQGLSDAEEFVIVKALNALTCMCQLGLLQKPHVYEFASDIAPFLCHPNLWIRYGAVGFITVVAHQISTADVYCKLMPYLDPYITQPVIQIERKLVLLSVLKEPVSRSIFDYALRSKDIASLFRHLHMRQKKRNGSLLDCPPPEDPAIAQLLKKLLSQGMTEEEEDKLLALKDFMMKSNRAKANAVDQSHLHDSSQKGVIDLAALGITGRQVDLVKTKQEPDEKRARKHVKQDSNVNEEWKSMFGSLEPPNIPQALPKTSDHEVVPTGKSPRSESSAGVCVPLSTSPQVSEAAHIPSKKPVIPVVSSTVLPSTYQIRITTCKTELQQLIQQKREQCNAERIAKQMMENAEWESKPPPPGWRPKGLLVAHLHEHKSAVNRIRVSDEHLLFATCSNDGTVKIWNSQKMEGKTTTTRSILTYSRIGGRVKTLTFCQGSHYLAIASDNGAVQLLGIEASKLPKSPKIHPLQSRILDQKEDGCVVDMHHFNSGAQSVLAYATVNGSLVGWDLRSSSNAWTLKHDLKSGLITSFAVDIHQCWLCIGTSSGAMACWDMRFQLPISSHCHPSRARIRRLSMHPLYQSWVIAAVQGNNEVSMWDMETGDRRLTLWASSAPPLSELQPSPHSVHGIYCSPADGNPILLTAGSDMKIRFWDLVSPERSYVVAGSTGSPSVSYYKKIIEGTEVVQEIQNKQKVGPSDDTPRRGPESLPVGHHDIITDIATFQTTQGFIVTASRDGIVKVWK</sequence>
<comment type="function">
    <text evidence="3">Regulatory subunit of the PI3K complex that mediates formation of phosphatidylinositol 3-phosphate; different complex forms are believed to play a role in multiple membrane trafficking pathways: PI3KC3-C1 is involved in initiation of autophagosomes and PI3KC3-C2 in maturation of autophagosomes and endocytosis. Involved in regulation of degradative endocytic trafficking and cytokinesis, probably in the context of PI3KC3-C2 (By similarity).</text>
</comment>
<comment type="catalytic activity">
    <reaction>
        <text>L-seryl-[protein] + ATP = O-phospho-L-seryl-[protein] + ADP + H(+)</text>
        <dbReference type="Rhea" id="RHEA:17989"/>
        <dbReference type="Rhea" id="RHEA-COMP:9863"/>
        <dbReference type="Rhea" id="RHEA-COMP:11604"/>
        <dbReference type="ChEBI" id="CHEBI:15378"/>
        <dbReference type="ChEBI" id="CHEBI:29999"/>
        <dbReference type="ChEBI" id="CHEBI:30616"/>
        <dbReference type="ChEBI" id="CHEBI:83421"/>
        <dbReference type="ChEBI" id="CHEBI:456216"/>
        <dbReference type="EC" id="2.7.11.1"/>
    </reaction>
</comment>
<comment type="catalytic activity">
    <reaction>
        <text>L-threonyl-[protein] + ATP = O-phospho-L-threonyl-[protein] + ADP + H(+)</text>
        <dbReference type="Rhea" id="RHEA:46608"/>
        <dbReference type="Rhea" id="RHEA-COMP:11060"/>
        <dbReference type="Rhea" id="RHEA-COMP:11605"/>
        <dbReference type="ChEBI" id="CHEBI:15378"/>
        <dbReference type="ChEBI" id="CHEBI:30013"/>
        <dbReference type="ChEBI" id="CHEBI:30616"/>
        <dbReference type="ChEBI" id="CHEBI:61977"/>
        <dbReference type="ChEBI" id="CHEBI:456216"/>
        <dbReference type="EC" id="2.7.11.1"/>
    </reaction>
</comment>
<comment type="cofactor">
    <cofactor evidence="1">
        <name>Mn(2+)</name>
        <dbReference type="ChEBI" id="CHEBI:29035"/>
    </cofactor>
</comment>
<comment type="subunit">
    <text evidence="2 3">Component of the PI3K (PI3KC3/PI3K-III/class III phosphatidylinositol 3-kinase) complex the core of which is composed of the catalytic subunit PIK3C3, the regulatory subunit PIK3R4 and BECN1 associating with additional regulatory/auxiliary subunits to form alternative complex forms. Alternative complex forms containing a fourth regulatory subunit in a mutually exclusive manner are PI3K complex I (PI3KC3-C1) containing ATG14, and PI3K complex II (PI3KC3-C2) containing UVRAG. PI3KC3-C1 displays a V-shaped architecture with PIK3R4 serving as a bridge between PIK3C3 and the ATG14:BECN1 subcomplex. Both, PI3KC3-C1 and PI3KC3-C2, can associate with further regulatory subunits, such as RUBCN, SH3GLB1/Bif-1, AMBRA1 and NRBF2. PI3KC3-C1 probably associates with PIK3CB. Interacts with RAB7A in the presence of PIK3C3/VPS34. Interacts with NRBF2 (By similarity). Interacts with ARMC3 (By similarity).</text>
</comment>
<comment type="subcellular location">
    <subcellularLocation>
        <location evidence="1">Late endosome</location>
    </subcellularLocation>
    <subcellularLocation>
        <location evidence="7">Cytoplasmic vesicle</location>
        <location evidence="7">Autophagosome</location>
    </subcellularLocation>
    <subcellularLocation>
        <location evidence="3">Membrane</location>
        <topology evidence="3">Lipid-anchor</topology>
    </subcellularLocation>
    <text evidence="2 7">As component of the PI3K complex I localized to pre-autophagosome structures. As component of the PI3K complex II localized predominantly to endosomes. Localizes also to discrete punctae along the ciliary axoneme (By similarity).</text>
</comment>
<comment type="PTM">
    <text evidence="1">Myristoylated.</text>
</comment>
<comment type="PTM">
    <text evidence="1">Probably autophosphorylated.</text>
</comment>
<comment type="similarity">
    <text evidence="4">Belongs to the protein kinase superfamily. Ser/Thr protein kinase family.</text>
</comment>
<reference key="1">
    <citation type="journal article" date="2004" name="Nature">
        <title>Genome sequence of the Brown Norway rat yields insights into mammalian evolution.</title>
        <authorList>
            <person name="Gibbs R.A."/>
            <person name="Weinstock G.M."/>
            <person name="Metzker M.L."/>
            <person name="Muzny D.M."/>
            <person name="Sodergren E.J."/>
            <person name="Scherer S."/>
            <person name="Scott G."/>
            <person name="Steffen D."/>
            <person name="Worley K.C."/>
            <person name="Burch P.E."/>
            <person name="Okwuonu G."/>
            <person name="Hines S."/>
            <person name="Lewis L."/>
            <person name="Deramo C."/>
            <person name="Delgado O."/>
            <person name="Dugan-Rocha S."/>
            <person name="Miner G."/>
            <person name="Morgan M."/>
            <person name="Hawes A."/>
            <person name="Gill R."/>
            <person name="Holt R.A."/>
            <person name="Adams M.D."/>
            <person name="Amanatides P.G."/>
            <person name="Baden-Tillson H."/>
            <person name="Barnstead M."/>
            <person name="Chin S."/>
            <person name="Evans C.A."/>
            <person name="Ferriera S."/>
            <person name="Fosler C."/>
            <person name="Glodek A."/>
            <person name="Gu Z."/>
            <person name="Jennings D."/>
            <person name="Kraft C.L."/>
            <person name="Nguyen T."/>
            <person name="Pfannkoch C.M."/>
            <person name="Sitter C."/>
            <person name="Sutton G.G."/>
            <person name="Venter J.C."/>
            <person name="Woodage T."/>
            <person name="Smith D."/>
            <person name="Lee H.-M."/>
            <person name="Gustafson E."/>
            <person name="Cahill P."/>
            <person name="Kana A."/>
            <person name="Doucette-Stamm L."/>
            <person name="Weinstock K."/>
            <person name="Fechtel K."/>
            <person name="Weiss R.B."/>
            <person name="Dunn D.M."/>
            <person name="Green E.D."/>
            <person name="Blakesley R.W."/>
            <person name="Bouffard G.G."/>
            <person name="De Jong P.J."/>
            <person name="Osoegawa K."/>
            <person name="Zhu B."/>
            <person name="Marra M."/>
            <person name="Schein J."/>
            <person name="Bosdet I."/>
            <person name="Fjell C."/>
            <person name="Jones S."/>
            <person name="Krzywinski M."/>
            <person name="Mathewson C."/>
            <person name="Siddiqui A."/>
            <person name="Wye N."/>
            <person name="McPherson J."/>
            <person name="Zhao S."/>
            <person name="Fraser C.M."/>
            <person name="Shetty J."/>
            <person name="Shatsman S."/>
            <person name="Geer K."/>
            <person name="Chen Y."/>
            <person name="Abramzon S."/>
            <person name="Nierman W.C."/>
            <person name="Havlak P.H."/>
            <person name="Chen R."/>
            <person name="Durbin K.J."/>
            <person name="Egan A."/>
            <person name="Ren Y."/>
            <person name="Song X.-Z."/>
            <person name="Li B."/>
            <person name="Liu Y."/>
            <person name="Qin X."/>
            <person name="Cawley S."/>
            <person name="Cooney A.J."/>
            <person name="D'Souza L.M."/>
            <person name="Martin K."/>
            <person name="Wu J.Q."/>
            <person name="Gonzalez-Garay M.L."/>
            <person name="Jackson A.R."/>
            <person name="Kalafus K.J."/>
            <person name="McLeod M.P."/>
            <person name="Milosavljevic A."/>
            <person name="Virk D."/>
            <person name="Volkov A."/>
            <person name="Wheeler D.A."/>
            <person name="Zhang Z."/>
            <person name="Bailey J.A."/>
            <person name="Eichler E.E."/>
            <person name="Tuzun E."/>
            <person name="Birney E."/>
            <person name="Mongin E."/>
            <person name="Ureta-Vidal A."/>
            <person name="Woodwark C."/>
            <person name="Zdobnov E."/>
            <person name="Bork P."/>
            <person name="Suyama M."/>
            <person name="Torrents D."/>
            <person name="Alexandersson M."/>
            <person name="Trask B.J."/>
            <person name="Young J.M."/>
            <person name="Huang H."/>
            <person name="Wang H."/>
            <person name="Xing H."/>
            <person name="Daniels S."/>
            <person name="Gietzen D."/>
            <person name="Schmidt J."/>
            <person name="Stevens K."/>
            <person name="Vitt U."/>
            <person name="Wingrove J."/>
            <person name="Camara F."/>
            <person name="Mar Alba M."/>
            <person name="Abril J.F."/>
            <person name="Guigo R."/>
            <person name="Smit A."/>
            <person name="Dubchak I."/>
            <person name="Rubin E.M."/>
            <person name="Couronne O."/>
            <person name="Poliakov A."/>
            <person name="Huebner N."/>
            <person name="Ganten D."/>
            <person name="Goesele C."/>
            <person name="Hummel O."/>
            <person name="Kreitler T."/>
            <person name="Lee Y.-A."/>
            <person name="Monti J."/>
            <person name="Schulz H."/>
            <person name="Zimdahl H."/>
            <person name="Himmelbauer H."/>
            <person name="Lehrach H."/>
            <person name="Jacob H.J."/>
            <person name="Bromberg S."/>
            <person name="Gullings-Handley J."/>
            <person name="Jensen-Seaman M.I."/>
            <person name="Kwitek A.E."/>
            <person name="Lazar J."/>
            <person name="Pasko D."/>
            <person name="Tonellato P.J."/>
            <person name="Twigger S."/>
            <person name="Ponting C.P."/>
            <person name="Duarte J.M."/>
            <person name="Rice S."/>
            <person name="Goodstadt L."/>
            <person name="Beatson S.A."/>
            <person name="Emes R.D."/>
            <person name="Winter E.E."/>
            <person name="Webber C."/>
            <person name="Brandt P."/>
            <person name="Nyakatura G."/>
            <person name="Adetobi M."/>
            <person name="Chiaromonte F."/>
            <person name="Elnitski L."/>
            <person name="Eswara P."/>
            <person name="Hardison R.C."/>
            <person name="Hou M."/>
            <person name="Kolbe D."/>
            <person name="Makova K."/>
            <person name="Miller W."/>
            <person name="Nekrutenko A."/>
            <person name="Riemer C."/>
            <person name="Schwartz S."/>
            <person name="Taylor J."/>
            <person name="Yang S."/>
            <person name="Zhang Y."/>
            <person name="Lindpaintner K."/>
            <person name="Andrews T.D."/>
            <person name="Caccamo M."/>
            <person name="Clamp M."/>
            <person name="Clarke L."/>
            <person name="Curwen V."/>
            <person name="Durbin R.M."/>
            <person name="Eyras E."/>
            <person name="Searle S.M."/>
            <person name="Cooper G.M."/>
            <person name="Batzoglou S."/>
            <person name="Brudno M."/>
            <person name="Sidow A."/>
            <person name="Stone E.A."/>
            <person name="Payseur B.A."/>
            <person name="Bourque G."/>
            <person name="Lopez-Otin C."/>
            <person name="Puente X.S."/>
            <person name="Chakrabarti K."/>
            <person name="Chatterji S."/>
            <person name="Dewey C."/>
            <person name="Pachter L."/>
            <person name="Bray N."/>
            <person name="Yap V.B."/>
            <person name="Caspi A."/>
            <person name="Tesler G."/>
            <person name="Pevzner P.A."/>
            <person name="Haussler D."/>
            <person name="Roskin K.M."/>
            <person name="Baertsch R."/>
            <person name="Clawson H."/>
            <person name="Furey T.S."/>
            <person name="Hinrichs A.S."/>
            <person name="Karolchik D."/>
            <person name="Kent W.J."/>
            <person name="Rosenbloom K.R."/>
            <person name="Trumbower H."/>
            <person name="Weirauch M."/>
            <person name="Cooper D.N."/>
            <person name="Stenson P.D."/>
            <person name="Ma B."/>
            <person name="Brent M."/>
            <person name="Arumugam M."/>
            <person name="Shteynberg D."/>
            <person name="Copley R.R."/>
            <person name="Taylor M.S."/>
            <person name="Riethman H."/>
            <person name="Mudunuri U."/>
            <person name="Peterson J."/>
            <person name="Guyer M."/>
            <person name="Felsenfeld A."/>
            <person name="Old S."/>
            <person name="Mockrin S."/>
            <person name="Collins F.S."/>
        </authorList>
    </citation>
    <scope>NUCLEOTIDE SEQUENCE [LARGE SCALE GENOMIC DNA]</scope>
</reference>
<organism>
    <name type="scientific">Rattus norvegicus</name>
    <name type="common">Rat</name>
    <dbReference type="NCBI Taxonomy" id="10116"/>
    <lineage>
        <taxon>Eukaryota</taxon>
        <taxon>Metazoa</taxon>
        <taxon>Chordata</taxon>
        <taxon>Craniata</taxon>
        <taxon>Vertebrata</taxon>
        <taxon>Euteleostomi</taxon>
        <taxon>Mammalia</taxon>
        <taxon>Eutheria</taxon>
        <taxon>Euarchontoglires</taxon>
        <taxon>Glires</taxon>
        <taxon>Rodentia</taxon>
        <taxon>Myomorpha</taxon>
        <taxon>Muroidea</taxon>
        <taxon>Muridae</taxon>
        <taxon>Murinae</taxon>
        <taxon>Rattus</taxon>
    </lineage>
</organism>
<keyword id="KW-0067">ATP-binding</keyword>
<keyword id="KW-0968">Cytoplasmic vesicle</keyword>
<keyword id="KW-0967">Endosome</keyword>
<keyword id="KW-0418">Kinase</keyword>
<keyword id="KW-0449">Lipoprotein</keyword>
<keyword id="KW-0472">Membrane</keyword>
<keyword id="KW-0519">Myristate</keyword>
<keyword id="KW-0547">Nucleotide-binding</keyword>
<keyword id="KW-0597">Phosphoprotein</keyword>
<keyword id="KW-1185">Reference proteome</keyword>
<keyword id="KW-0677">Repeat</keyword>
<keyword id="KW-0723">Serine/threonine-protein kinase</keyword>
<keyword id="KW-0808">Transferase</keyword>
<keyword id="KW-0853">WD repeat</keyword>
<dbReference type="EC" id="2.7.11.1"/>
<dbReference type="EMBL" id="AABR03062590">
    <property type="status" value="NOT_ANNOTATED_CDS"/>
    <property type="molecule type" value="Genomic_DNA"/>
</dbReference>
<dbReference type="EMBL" id="AABR03066737">
    <property type="status" value="NOT_ANNOTATED_CDS"/>
    <property type="molecule type" value="Genomic_DNA"/>
</dbReference>
<dbReference type="EMBL" id="AABR03063719">
    <property type="status" value="NOT_ANNOTATED_CDS"/>
    <property type="molecule type" value="Genomic_DNA"/>
</dbReference>
<dbReference type="RefSeq" id="NP_001388143.1">
    <property type="nucleotide sequence ID" value="NM_001401214.1"/>
</dbReference>
<dbReference type="RefSeq" id="XP_006243862.1">
    <property type="nucleotide sequence ID" value="XM_006243800.1"/>
</dbReference>
<dbReference type="RefSeq" id="XP_006243863.1">
    <property type="nucleotide sequence ID" value="XM_006243801.5"/>
</dbReference>
<dbReference type="SMR" id="P0C0R5"/>
<dbReference type="FunCoup" id="P0C0R5">
    <property type="interactions" value="3952"/>
</dbReference>
<dbReference type="STRING" id="10116.ENSRNOP00000018654"/>
<dbReference type="iPTMnet" id="P0C0R5"/>
<dbReference type="PhosphoSitePlus" id="P0C0R5"/>
<dbReference type="jPOST" id="P0C0R5"/>
<dbReference type="PaxDb" id="10116-ENSRNOP00000018654"/>
<dbReference type="Ensembl" id="ENSRNOT00000018654.8">
    <property type="protein sequence ID" value="ENSRNOP00000018654.4"/>
    <property type="gene ID" value="ENSRNOG00000013669.8"/>
</dbReference>
<dbReference type="GeneID" id="363131"/>
<dbReference type="AGR" id="RGD:1311809"/>
<dbReference type="CTD" id="30849"/>
<dbReference type="RGD" id="1311809">
    <property type="gene designation" value="Pik3r4"/>
</dbReference>
<dbReference type="eggNOG" id="KOG1240">
    <property type="taxonomic scope" value="Eukaryota"/>
</dbReference>
<dbReference type="GeneTree" id="ENSGT00390000016225"/>
<dbReference type="InParanoid" id="P0C0R5"/>
<dbReference type="OMA" id="ATNTCRI"/>
<dbReference type="OrthoDB" id="242910at2759"/>
<dbReference type="PhylomeDB" id="P0C0R5"/>
<dbReference type="TreeFam" id="TF102034"/>
<dbReference type="Reactome" id="R-RNO-109704">
    <property type="pathway name" value="PI3K Cascade"/>
</dbReference>
<dbReference type="Reactome" id="R-RNO-1632852">
    <property type="pathway name" value="Macroautophagy"/>
</dbReference>
<dbReference type="Reactome" id="R-RNO-1660514">
    <property type="pathway name" value="Synthesis of PIPs at the Golgi membrane"/>
</dbReference>
<dbReference type="Reactome" id="R-RNO-1660516">
    <property type="pathway name" value="Synthesis of PIPs at the early endosome membrane"/>
</dbReference>
<dbReference type="Reactome" id="R-RNO-1660517">
    <property type="pathway name" value="Synthesis of PIPs at the late endosome membrane"/>
</dbReference>
<dbReference type="Reactome" id="R-RNO-168138">
    <property type="pathway name" value="Toll Like Receptor 9 (TLR9) Cascade"/>
</dbReference>
<dbReference type="Reactome" id="R-RNO-5668599">
    <property type="pathway name" value="RHO GTPases Activate NADPH Oxidases"/>
</dbReference>
<dbReference type="PRO" id="PR:P0C0R5"/>
<dbReference type="Proteomes" id="UP000002494">
    <property type="component" value="Chromosome 8"/>
</dbReference>
<dbReference type="Bgee" id="ENSRNOG00000013669">
    <property type="expression patterns" value="Expressed in Ammon's horn and 20 other cell types or tissues"/>
</dbReference>
<dbReference type="ExpressionAtlas" id="P0C0R5">
    <property type="expression patterns" value="baseline and differential"/>
</dbReference>
<dbReference type="GO" id="GO:0005776">
    <property type="term" value="C:autophagosome"/>
    <property type="evidence" value="ECO:0007669"/>
    <property type="project" value="UniProtKB-SubCell"/>
</dbReference>
<dbReference type="GO" id="GO:0005930">
    <property type="term" value="C:axoneme"/>
    <property type="evidence" value="ECO:0000250"/>
    <property type="project" value="UniProtKB"/>
</dbReference>
<dbReference type="GO" id="GO:0036064">
    <property type="term" value="C:ciliary basal body"/>
    <property type="evidence" value="ECO:0007669"/>
    <property type="project" value="Ensembl"/>
</dbReference>
<dbReference type="GO" id="GO:0045171">
    <property type="term" value="C:intercellular bridge"/>
    <property type="evidence" value="ECO:0007669"/>
    <property type="project" value="Ensembl"/>
</dbReference>
<dbReference type="GO" id="GO:0005770">
    <property type="term" value="C:late endosome"/>
    <property type="evidence" value="ECO:0000250"/>
    <property type="project" value="UniProtKB"/>
</dbReference>
<dbReference type="GO" id="GO:0071561">
    <property type="term" value="C:nucleus-vacuole junction"/>
    <property type="evidence" value="ECO:0000318"/>
    <property type="project" value="GO_Central"/>
</dbReference>
<dbReference type="GO" id="GO:0035032">
    <property type="term" value="C:phosphatidylinositol 3-kinase complex, class III"/>
    <property type="evidence" value="ECO:0000250"/>
    <property type="project" value="UniProtKB"/>
</dbReference>
<dbReference type="GO" id="GO:0034271">
    <property type="term" value="C:phosphatidylinositol 3-kinase complex, class III, type I"/>
    <property type="evidence" value="ECO:0000318"/>
    <property type="project" value="GO_Central"/>
</dbReference>
<dbReference type="GO" id="GO:0034272">
    <property type="term" value="C:phosphatidylinositol 3-kinase complex, class III, type II"/>
    <property type="evidence" value="ECO:0000318"/>
    <property type="project" value="GO_Central"/>
</dbReference>
<dbReference type="GO" id="GO:0005524">
    <property type="term" value="F:ATP binding"/>
    <property type="evidence" value="ECO:0007669"/>
    <property type="project" value="UniProtKB-KW"/>
</dbReference>
<dbReference type="GO" id="GO:0106310">
    <property type="term" value="F:protein serine kinase activity"/>
    <property type="evidence" value="ECO:0007669"/>
    <property type="project" value="RHEA"/>
</dbReference>
<dbReference type="GO" id="GO:0004674">
    <property type="term" value="F:protein serine/threonine kinase activity"/>
    <property type="evidence" value="ECO:0000318"/>
    <property type="project" value="GO_Central"/>
</dbReference>
<dbReference type="GO" id="GO:0097352">
    <property type="term" value="P:autophagosome maturation"/>
    <property type="evidence" value="ECO:0000266"/>
    <property type="project" value="RGD"/>
</dbReference>
<dbReference type="GO" id="GO:0042149">
    <property type="term" value="P:cellular response to glucose starvation"/>
    <property type="evidence" value="ECO:0000250"/>
    <property type="project" value="UniProtKB"/>
</dbReference>
<dbReference type="GO" id="GO:0045022">
    <property type="term" value="P:early endosome to late endosome transport"/>
    <property type="evidence" value="ECO:0000266"/>
    <property type="project" value="RGD"/>
</dbReference>
<dbReference type="GO" id="GO:0045324">
    <property type="term" value="P:late endosome to vacuole transport"/>
    <property type="evidence" value="ECO:0000318"/>
    <property type="project" value="GO_Central"/>
</dbReference>
<dbReference type="GO" id="GO:0000425">
    <property type="term" value="P:pexophagy"/>
    <property type="evidence" value="ECO:0000318"/>
    <property type="project" value="GO_Central"/>
</dbReference>
<dbReference type="GO" id="GO:0043491">
    <property type="term" value="P:phosphatidylinositol 3-kinase/protein kinase B signal transduction"/>
    <property type="evidence" value="ECO:0000266"/>
    <property type="project" value="RGD"/>
</dbReference>
<dbReference type="GO" id="GO:0036092">
    <property type="term" value="P:phosphatidylinositol-3-phosphate biosynthetic process"/>
    <property type="evidence" value="ECO:0000266"/>
    <property type="project" value="RGD"/>
</dbReference>
<dbReference type="GO" id="GO:0006623">
    <property type="term" value="P:protein targeting to vacuole"/>
    <property type="evidence" value="ECO:0000318"/>
    <property type="project" value="GO_Central"/>
</dbReference>
<dbReference type="GO" id="GO:0032801">
    <property type="term" value="P:receptor catabolic process"/>
    <property type="evidence" value="ECO:0000266"/>
    <property type="project" value="RGD"/>
</dbReference>
<dbReference type="GO" id="GO:0010506">
    <property type="term" value="P:regulation of autophagy"/>
    <property type="evidence" value="ECO:0000266"/>
    <property type="project" value="RGD"/>
</dbReference>
<dbReference type="GO" id="GO:0032465">
    <property type="term" value="P:regulation of cytokinesis"/>
    <property type="evidence" value="ECO:0000266"/>
    <property type="project" value="RGD"/>
</dbReference>
<dbReference type="GO" id="GO:0016241">
    <property type="term" value="P:regulation of macroautophagy"/>
    <property type="evidence" value="ECO:0000266"/>
    <property type="project" value="RGD"/>
</dbReference>
<dbReference type="CDD" id="cd13980">
    <property type="entry name" value="STKc_Vps15"/>
    <property type="match status" value="1"/>
</dbReference>
<dbReference type="FunFam" id="1.25.10.10:FF:000154">
    <property type="entry name" value="Phosphoinositide 3-kinase regulatory subunit 4"/>
    <property type="match status" value="1"/>
</dbReference>
<dbReference type="FunFam" id="1.10.510.10:FF:000305">
    <property type="entry name" value="phosphoinositide 3-kinase regulatory subunit 4"/>
    <property type="match status" value="1"/>
</dbReference>
<dbReference type="FunFam" id="1.25.10.10:FF:000100">
    <property type="entry name" value="phosphoinositide 3-kinase regulatory subunit 4"/>
    <property type="match status" value="1"/>
</dbReference>
<dbReference type="FunFam" id="2.130.10.10:FF:000396">
    <property type="entry name" value="phosphoinositide 3-kinase regulatory subunit 4"/>
    <property type="match status" value="1"/>
</dbReference>
<dbReference type="FunFam" id="2.130.10.10:FF:001215">
    <property type="entry name" value="phosphoinositide 3-kinase regulatory subunit 4"/>
    <property type="match status" value="1"/>
</dbReference>
<dbReference type="Gene3D" id="1.25.10.10">
    <property type="entry name" value="Leucine-rich Repeat Variant"/>
    <property type="match status" value="2"/>
</dbReference>
<dbReference type="Gene3D" id="1.10.510.10">
    <property type="entry name" value="Transferase(Phosphotransferase) domain 1"/>
    <property type="match status" value="1"/>
</dbReference>
<dbReference type="Gene3D" id="2.130.10.10">
    <property type="entry name" value="YVTN repeat-like/Quinoprotein amine dehydrogenase"/>
    <property type="match status" value="2"/>
</dbReference>
<dbReference type="InterPro" id="IPR011989">
    <property type="entry name" value="ARM-like"/>
</dbReference>
<dbReference type="InterPro" id="IPR016024">
    <property type="entry name" value="ARM-type_fold"/>
</dbReference>
<dbReference type="InterPro" id="IPR021133">
    <property type="entry name" value="HEAT_type_2"/>
</dbReference>
<dbReference type="InterPro" id="IPR011009">
    <property type="entry name" value="Kinase-like_dom_sf"/>
</dbReference>
<dbReference type="InterPro" id="IPR000719">
    <property type="entry name" value="Prot_kinase_dom"/>
</dbReference>
<dbReference type="InterPro" id="IPR008271">
    <property type="entry name" value="Ser/Thr_kinase_AS"/>
</dbReference>
<dbReference type="InterPro" id="IPR045162">
    <property type="entry name" value="Vps15-like"/>
</dbReference>
<dbReference type="InterPro" id="IPR055231">
    <property type="entry name" value="VPS15-like_hel"/>
</dbReference>
<dbReference type="InterPro" id="IPR015943">
    <property type="entry name" value="WD40/YVTN_repeat-like_dom_sf"/>
</dbReference>
<dbReference type="InterPro" id="IPR036322">
    <property type="entry name" value="WD40_repeat_dom_sf"/>
</dbReference>
<dbReference type="InterPro" id="IPR001680">
    <property type="entry name" value="WD40_rpt"/>
</dbReference>
<dbReference type="PANTHER" id="PTHR17583">
    <property type="entry name" value="PHOSPHOINOSITIDE 3-KINASE REGULATORY SUBUNIT 4"/>
    <property type="match status" value="1"/>
</dbReference>
<dbReference type="PANTHER" id="PTHR17583:SF0">
    <property type="entry name" value="PHOSPHOINOSITIDE 3-KINASE REGULATORY SUBUNIT 4"/>
    <property type="match status" value="1"/>
</dbReference>
<dbReference type="Pfam" id="PF00069">
    <property type="entry name" value="Pkinase"/>
    <property type="match status" value="1"/>
</dbReference>
<dbReference type="Pfam" id="PF22956">
    <property type="entry name" value="VPS15-like_hel"/>
    <property type="match status" value="1"/>
</dbReference>
<dbReference type="Pfam" id="PF00400">
    <property type="entry name" value="WD40"/>
    <property type="match status" value="2"/>
</dbReference>
<dbReference type="SMART" id="SM00220">
    <property type="entry name" value="S_TKc"/>
    <property type="match status" value="1"/>
</dbReference>
<dbReference type="SMART" id="SM00320">
    <property type="entry name" value="WD40"/>
    <property type="match status" value="6"/>
</dbReference>
<dbReference type="SUPFAM" id="SSF48371">
    <property type="entry name" value="ARM repeat"/>
    <property type="match status" value="1"/>
</dbReference>
<dbReference type="SUPFAM" id="SSF56112">
    <property type="entry name" value="Protein kinase-like (PK-like)"/>
    <property type="match status" value="1"/>
</dbReference>
<dbReference type="SUPFAM" id="SSF50978">
    <property type="entry name" value="WD40 repeat-like"/>
    <property type="match status" value="1"/>
</dbReference>
<dbReference type="PROSITE" id="PS50077">
    <property type="entry name" value="HEAT_REPEAT"/>
    <property type="match status" value="1"/>
</dbReference>
<dbReference type="PROSITE" id="PS50011">
    <property type="entry name" value="PROTEIN_KINASE_DOM"/>
    <property type="match status" value="1"/>
</dbReference>
<dbReference type="PROSITE" id="PS00108">
    <property type="entry name" value="PROTEIN_KINASE_ST"/>
    <property type="match status" value="1"/>
</dbReference>
<dbReference type="PROSITE" id="PS00678">
    <property type="entry name" value="WD_REPEATS_1"/>
    <property type="match status" value="2"/>
</dbReference>
<dbReference type="PROSITE" id="PS50082">
    <property type="entry name" value="WD_REPEATS_2"/>
    <property type="match status" value="3"/>
</dbReference>
<dbReference type="PROSITE" id="PS50294">
    <property type="entry name" value="WD_REPEATS_REGION"/>
    <property type="match status" value="2"/>
</dbReference>
<accession>P0C0R5</accession>
<protein>
    <recommendedName>
        <fullName>Phosphoinositide 3-kinase regulatory subunit 4</fullName>
        <shortName>PI3-kinase regulatory subunit 4</shortName>
        <ecNumber>2.7.11.1</ecNumber>
    </recommendedName>
</protein>
<proteinExistence type="inferred from homology"/>
<name>PI3R4_RAT</name>
<gene>
    <name type="primary">Pik3r4</name>
</gene>
<feature type="initiator methionine" description="Removed" evidence="3">
    <location>
        <position position="1"/>
    </location>
</feature>
<feature type="chain" id="PRO_0000086527" description="Phosphoinositide 3-kinase regulatory subunit 4">
    <location>
        <begin position="2"/>
        <end position="1358"/>
    </location>
</feature>
<feature type="domain" description="Protein kinase" evidence="4">
    <location>
        <begin position="26"/>
        <end position="324"/>
    </location>
</feature>
<feature type="repeat" description="HEAT 1">
    <location>
        <begin position="413"/>
        <end position="450"/>
    </location>
</feature>
<feature type="repeat" description="HEAT 2">
    <location>
        <begin position="458"/>
        <end position="495"/>
    </location>
</feature>
<feature type="repeat" description="HEAT 3">
    <location>
        <begin position="572"/>
        <end position="610"/>
    </location>
</feature>
<feature type="repeat" description="HEAT 4">
    <location>
        <begin position="612"/>
        <end position="648"/>
    </location>
</feature>
<feature type="repeat" description="WD 1">
    <location>
        <begin position="991"/>
        <end position="1030"/>
    </location>
</feature>
<feature type="repeat" description="WD 2">
    <location>
        <begin position="1040"/>
        <end position="1079"/>
    </location>
</feature>
<feature type="repeat" description="WD 3">
    <location>
        <begin position="1093"/>
        <end position="1134"/>
    </location>
</feature>
<feature type="repeat" description="WD 4">
    <location>
        <begin position="1139"/>
        <end position="1178"/>
    </location>
</feature>
<feature type="repeat" description="WD 5">
    <location>
        <begin position="1182"/>
        <end position="1223"/>
    </location>
</feature>
<feature type="repeat" description="WD 6">
    <location>
        <begin position="1237"/>
        <end position="1278"/>
    </location>
</feature>
<feature type="repeat" description="WD 7">
    <location>
        <begin position="1327"/>
        <end position="1358"/>
    </location>
</feature>
<feature type="region of interest" description="Disordered" evidence="6">
    <location>
        <begin position="875"/>
        <end position="899"/>
    </location>
</feature>
<feature type="region of interest" description="Disordered" evidence="6">
    <location>
        <begin position="1307"/>
        <end position="1326"/>
    </location>
</feature>
<feature type="compositionally biased region" description="Basic and acidic residues" evidence="6">
    <location>
        <begin position="1315"/>
        <end position="1326"/>
    </location>
</feature>
<feature type="active site" description="Proton acceptor" evidence="4 5">
    <location>
        <position position="148"/>
    </location>
</feature>
<feature type="binding site" evidence="4">
    <location>
        <begin position="32"/>
        <end position="40"/>
    </location>
    <ligand>
        <name>ATP</name>
        <dbReference type="ChEBI" id="CHEBI:30616"/>
    </ligand>
</feature>
<feature type="binding site" evidence="4">
    <location>
        <position position="53"/>
    </location>
    <ligand>
        <name>ATP</name>
        <dbReference type="ChEBI" id="CHEBI:30616"/>
    </ligand>
</feature>
<feature type="modified residue" description="Phosphoserine" evidence="3">
    <location>
        <position position="808"/>
    </location>
</feature>
<feature type="modified residue" description="Phosphoserine" evidence="3">
    <location>
        <position position="813"/>
    </location>
</feature>
<feature type="modified residue" description="Phosphoserine" evidence="3">
    <location>
        <position position="853"/>
    </location>
</feature>
<feature type="modified residue" description="Phosphoserine" evidence="3">
    <location>
        <position position="865"/>
    </location>
</feature>
<feature type="modified residue" description="Phosphothreonine" evidence="3">
    <location>
        <position position="1316"/>
    </location>
</feature>
<feature type="lipid moiety-binding region" description="N-myristoyl glycine" evidence="3">
    <location>
        <position position="2"/>
    </location>
</feature>